<proteinExistence type="inferred from homology"/>
<accession>C4Z566</accession>
<gene>
    <name evidence="1" type="primary">ilvD</name>
    <name type="ordered locus">EUBELI_00762</name>
</gene>
<evidence type="ECO:0000255" key="1">
    <source>
        <dbReference type="HAMAP-Rule" id="MF_00012"/>
    </source>
</evidence>
<keyword id="KW-0001">2Fe-2S</keyword>
<keyword id="KW-0028">Amino-acid biosynthesis</keyword>
<keyword id="KW-0100">Branched-chain amino acid biosynthesis</keyword>
<keyword id="KW-0408">Iron</keyword>
<keyword id="KW-0411">Iron-sulfur</keyword>
<keyword id="KW-0456">Lyase</keyword>
<keyword id="KW-0460">Magnesium</keyword>
<keyword id="KW-0479">Metal-binding</keyword>
<keyword id="KW-1185">Reference proteome</keyword>
<reference key="1">
    <citation type="journal article" date="2009" name="Proc. Natl. Acad. Sci. U.S.A.">
        <title>Characterizing a model human gut microbiota composed of members of its two dominant bacterial phyla.</title>
        <authorList>
            <person name="Mahowald M.A."/>
            <person name="Rey F.E."/>
            <person name="Seedorf H."/>
            <person name="Turnbaugh P.J."/>
            <person name="Fulton R.S."/>
            <person name="Wollam A."/>
            <person name="Shah N."/>
            <person name="Wang C."/>
            <person name="Magrini V."/>
            <person name="Wilson R.K."/>
            <person name="Cantarel B.L."/>
            <person name="Coutinho P.M."/>
            <person name="Henrissat B."/>
            <person name="Crock L.W."/>
            <person name="Russell A."/>
            <person name="Verberkmoes N.C."/>
            <person name="Hettich R.L."/>
            <person name="Gordon J.I."/>
        </authorList>
    </citation>
    <scope>NUCLEOTIDE SEQUENCE [LARGE SCALE GENOMIC DNA]</scope>
    <source>
        <strain>ATCC 27750 / DSM 3376 / VPI C15-48 / C15-B4</strain>
    </source>
</reference>
<protein>
    <recommendedName>
        <fullName evidence="1">Dihydroxy-acid dehydratase</fullName>
        <shortName evidence="1">DAD</shortName>
        <ecNumber evidence="1">4.2.1.9</ecNumber>
    </recommendedName>
</protein>
<feature type="chain" id="PRO_1000201777" description="Dihydroxy-acid dehydratase">
    <location>
        <begin position="1"/>
        <end position="557"/>
    </location>
</feature>
<feature type="active site" description="Proton acceptor" evidence="1">
    <location>
        <position position="468"/>
    </location>
</feature>
<feature type="binding site" evidence="1">
    <location>
        <position position="78"/>
    </location>
    <ligand>
        <name>Mg(2+)</name>
        <dbReference type="ChEBI" id="CHEBI:18420"/>
    </ligand>
</feature>
<feature type="binding site" evidence="1">
    <location>
        <position position="119"/>
    </location>
    <ligand>
        <name>[2Fe-2S] cluster</name>
        <dbReference type="ChEBI" id="CHEBI:190135"/>
    </ligand>
</feature>
<feature type="binding site" evidence="1">
    <location>
        <position position="120"/>
    </location>
    <ligand>
        <name>Mg(2+)</name>
        <dbReference type="ChEBI" id="CHEBI:18420"/>
    </ligand>
</feature>
<feature type="binding site" description="via carbamate group" evidence="1">
    <location>
        <position position="121"/>
    </location>
    <ligand>
        <name>Mg(2+)</name>
        <dbReference type="ChEBI" id="CHEBI:18420"/>
    </ligand>
</feature>
<feature type="binding site" evidence="1">
    <location>
        <position position="191"/>
    </location>
    <ligand>
        <name>[2Fe-2S] cluster</name>
        <dbReference type="ChEBI" id="CHEBI:190135"/>
    </ligand>
</feature>
<feature type="binding site" evidence="1">
    <location>
        <position position="442"/>
    </location>
    <ligand>
        <name>Mg(2+)</name>
        <dbReference type="ChEBI" id="CHEBI:18420"/>
    </ligand>
</feature>
<feature type="modified residue" description="N6-carboxylysine" evidence="1">
    <location>
        <position position="121"/>
    </location>
</feature>
<comment type="function">
    <text evidence="1">Functions in the biosynthesis of branched-chain amino acids. Catalyzes the dehydration of (2R,3R)-2,3-dihydroxy-3-methylpentanoate (2,3-dihydroxy-3-methylvalerate) into 2-oxo-3-methylpentanoate (2-oxo-3-methylvalerate) and of (2R)-2,3-dihydroxy-3-methylbutanoate (2,3-dihydroxyisovalerate) into 2-oxo-3-methylbutanoate (2-oxoisovalerate), the penultimate precursor to L-isoleucine and L-valine, respectively.</text>
</comment>
<comment type="catalytic activity">
    <reaction evidence="1">
        <text>(2R)-2,3-dihydroxy-3-methylbutanoate = 3-methyl-2-oxobutanoate + H2O</text>
        <dbReference type="Rhea" id="RHEA:24809"/>
        <dbReference type="ChEBI" id="CHEBI:11851"/>
        <dbReference type="ChEBI" id="CHEBI:15377"/>
        <dbReference type="ChEBI" id="CHEBI:49072"/>
        <dbReference type="EC" id="4.2.1.9"/>
    </reaction>
    <physiologicalReaction direction="left-to-right" evidence="1">
        <dbReference type="Rhea" id="RHEA:24810"/>
    </physiologicalReaction>
</comment>
<comment type="catalytic activity">
    <reaction evidence="1">
        <text>(2R,3R)-2,3-dihydroxy-3-methylpentanoate = (S)-3-methyl-2-oxopentanoate + H2O</text>
        <dbReference type="Rhea" id="RHEA:27694"/>
        <dbReference type="ChEBI" id="CHEBI:15377"/>
        <dbReference type="ChEBI" id="CHEBI:35146"/>
        <dbReference type="ChEBI" id="CHEBI:49258"/>
        <dbReference type="EC" id="4.2.1.9"/>
    </reaction>
    <physiologicalReaction direction="left-to-right" evidence="1">
        <dbReference type="Rhea" id="RHEA:27695"/>
    </physiologicalReaction>
</comment>
<comment type="cofactor">
    <cofactor evidence="1">
        <name>[2Fe-2S] cluster</name>
        <dbReference type="ChEBI" id="CHEBI:190135"/>
    </cofactor>
    <text evidence="1">Binds 1 [2Fe-2S] cluster per subunit. This cluster acts as a Lewis acid cofactor.</text>
</comment>
<comment type="cofactor">
    <cofactor evidence="1">
        <name>Mg(2+)</name>
        <dbReference type="ChEBI" id="CHEBI:18420"/>
    </cofactor>
</comment>
<comment type="pathway">
    <text evidence="1">Amino-acid biosynthesis; L-isoleucine biosynthesis; L-isoleucine from 2-oxobutanoate: step 3/4.</text>
</comment>
<comment type="pathway">
    <text evidence="1">Amino-acid biosynthesis; L-valine biosynthesis; L-valine from pyruvate: step 3/4.</text>
</comment>
<comment type="subunit">
    <text evidence="1">Homodimer.</text>
</comment>
<comment type="similarity">
    <text evidence="1">Belongs to the IlvD/Edd family.</text>
</comment>
<organism>
    <name type="scientific">Lachnospira eligens (strain ATCC 27750 / DSM 3376 / VPI C15-48 / C15-B4)</name>
    <name type="common">Eubacterium eligens</name>
    <dbReference type="NCBI Taxonomy" id="515620"/>
    <lineage>
        <taxon>Bacteria</taxon>
        <taxon>Bacillati</taxon>
        <taxon>Bacillota</taxon>
        <taxon>Clostridia</taxon>
        <taxon>Lachnospirales</taxon>
        <taxon>Lachnospiraceae</taxon>
        <taxon>Lachnospira</taxon>
    </lineage>
</organism>
<sequence length="557" mass="58342">MISDNARSGMQQAPARSLFNALGFTAEEMKKPMIGIVSSYNEIVPGHMNIDKIVNAVKLGVAEAGGVPVVFPAIAVCDGIAMGHVGMKYSLVTRDLIADSTECMAIAHQFDGLVMVPNCDKNVPGLLMAAARLNLPTVFVSGGPMLAGHVKGKKRSLSSMFEAVGSYAAGTMTEEDVLEFEEKVCPTCGSCSGMYTANSMNCLTEALGMGLRGNGTIPAVYSERIKLAKHAGMAVMDMVNKGITARDIITKDSIMNALTVDMALGCSTNSMLHLPAIAHEIGFDFDIKFANPISEKTPNLCHLAPAGPTYMEDLNEAGGVYAVMKELADIGLLNTDCLTVSGKTIGECIATAYNRDPEVIRTVDNAYSKTGGLAVLSGNLAPDGSVVKRSAVVPEMLVHEGPARVFDSEEDAIAAIKGGKIVEGDVVVIRYEGPKGGPGMREMLNPTSAIAGMGLGSSVALITDGRFSGASRGASIGHVSPEAAVGGPIALVEEGDIISIDIPGLKLELKVSDEELAARKAKWQPREPKVTTGYLKRYASLVTSGNRGAILKSSADE</sequence>
<dbReference type="EC" id="4.2.1.9" evidence="1"/>
<dbReference type="EMBL" id="CP001104">
    <property type="protein sequence ID" value="ACR71770.1"/>
    <property type="molecule type" value="Genomic_DNA"/>
</dbReference>
<dbReference type="RefSeq" id="WP_012739006.1">
    <property type="nucleotide sequence ID" value="NC_012778.1"/>
</dbReference>
<dbReference type="SMR" id="C4Z566"/>
<dbReference type="STRING" id="515620.EUBELI_00762"/>
<dbReference type="GeneID" id="41355503"/>
<dbReference type="KEGG" id="eel:EUBELI_00762"/>
<dbReference type="eggNOG" id="COG0129">
    <property type="taxonomic scope" value="Bacteria"/>
</dbReference>
<dbReference type="HOGENOM" id="CLU_014271_4_2_9"/>
<dbReference type="UniPathway" id="UPA00047">
    <property type="reaction ID" value="UER00057"/>
</dbReference>
<dbReference type="UniPathway" id="UPA00049">
    <property type="reaction ID" value="UER00061"/>
</dbReference>
<dbReference type="Proteomes" id="UP000001476">
    <property type="component" value="Chromosome"/>
</dbReference>
<dbReference type="GO" id="GO:0005829">
    <property type="term" value="C:cytosol"/>
    <property type="evidence" value="ECO:0007669"/>
    <property type="project" value="TreeGrafter"/>
</dbReference>
<dbReference type="GO" id="GO:0051537">
    <property type="term" value="F:2 iron, 2 sulfur cluster binding"/>
    <property type="evidence" value="ECO:0007669"/>
    <property type="project" value="UniProtKB-UniRule"/>
</dbReference>
<dbReference type="GO" id="GO:0004160">
    <property type="term" value="F:dihydroxy-acid dehydratase activity"/>
    <property type="evidence" value="ECO:0007669"/>
    <property type="project" value="UniProtKB-UniRule"/>
</dbReference>
<dbReference type="GO" id="GO:0000287">
    <property type="term" value="F:magnesium ion binding"/>
    <property type="evidence" value="ECO:0007669"/>
    <property type="project" value="UniProtKB-UniRule"/>
</dbReference>
<dbReference type="GO" id="GO:0009097">
    <property type="term" value="P:isoleucine biosynthetic process"/>
    <property type="evidence" value="ECO:0007669"/>
    <property type="project" value="UniProtKB-UniRule"/>
</dbReference>
<dbReference type="GO" id="GO:0009099">
    <property type="term" value="P:L-valine biosynthetic process"/>
    <property type="evidence" value="ECO:0007669"/>
    <property type="project" value="UniProtKB-UniRule"/>
</dbReference>
<dbReference type="FunFam" id="3.50.30.80:FF:000001">
    <property type="entry name" value="Dihydroxy-acid dehydratase"/>
    <property type="match status" value="1"/>
</dbReference>
<dbReference type="Gene3D" id="3.50.30.80">
    <property type="entry name" value="IlvD/EDD C-terminal domain-like"/>
    <property type="match status" value="1"/>
</dbReference>
<dbReference type="HAMAP" id="MF_00012">
    <property type="entry name" value="IlvD"/>
    <property type="match status" value="1"/>
</dbReference>
<dbReference type="InterPro" id="IPR042096">
    <property type="entry name" value="Dihydro-acid_dehy_C"/>
</dbReference>
<dbReference type="InterPro" id="IPR004404">
    <property type="entry name" value="DihydroxyA_deHydtase"/>
</dbReference>
<dbReference type="InterPro" id="IPR020558">
    <property type="entry name" value="DiOHA_6PGluconate_deHydtase_CS"/>
</dbReference>
<dbReference type="InterPro" id="IPR056740">
    <property type="entry name" value="ILV_EDD_C"/>
</dbReference>
<dbReference type="InterPro" id="IPR000581">
    <property type="entry name" value="ILV_EDD_N"/>
</dbReference>
<dbReference type="InterPro" id="IPR037237">
    <property type="entry name" value="IlvD/EDD_N"/>
</dbReference>
<dbReference type="NCBIfam" id="TIGR00110">
    <property type="entry name" value="ilvD"/>
    <property type="match status" value="1"/>
</dbReference>
<dbReference type="NCBIfam" id="NF002068">
    <property type="entry name" value="PRK00911.1"/>
    <property type="match status" value="1"/>
</dbReference>
<dbReference type="PANTHER" id="PTHR43661">
    <property type="entry name" value="D-XYLONATE DEHYDRATASE"/>
    <property type="match status" value="1"/>
</dbReference>
<dbReference type="PANTHER" id="PTHR43661:SF3">
    <property type="entry name" value="D-XYLONATE DEHYDRATASE YAGF-RELATED"/>
    <property type="match status" value="1"/>
</dbReference>
<dbReference type="Pfam" id="PF24877">
    <property type="entry name" value="ILV_EDD_C"/>
    <property type="match status" value="1"/>
</dbReference>
<dbReference type="Pfam" id="PF00920">
    <property type="entry name" value="ILVD_EDD_N"/>
    <property type="match status" value="1"/>
</dbReference>
<dbReference type="SUPFAM" id="SSF143975">
    <property type="entry name" value="IlvD/EDD N-terminal domain-like"/>
    <property type="match status" value="1"/>
</dbReference>
<dbReference type="SUPFAM" id="SSF52016">
    <property type="entry name" value="LeuD/IlvD-like"/>
    <property type="match status" value="1"/>
</dbReference>
<dbReference type="PROSITE" id="PS00886">
    <property type="entry name" value="ILVD_EDD_1"/>
    <property type="match status" value="1"/>
</dbReference>
<dbReference type="PROSITE" id="PS00887">
    <property type="entry name" value="ILVD_EDD_2"/>
    <property type="match status" value="1"/>
</dbReference>
<name>ILVD_LACE2</name>